<sequence>MAAPGECFSVGSQVSCRTCQEQRLQGEVVAFDYPSKMLALKCPSSSGKPNHADILLVNLQYVSEVEIINDRTETPPPLASLNVSKLANKARMEKEEKLSQAYAISAGVSLEGQQLFQTIHKTIKDCKWQEKNIVVMEEVVIAPPYQVENCKGKEGSALGHVRKIVEKHFRDVESQKVMQRSQAQQTQKESALSS</sequence>
<name>LSM12_CHICK</name>
<feature type="chain" id="PRO_0000305129" description="Protein LSM12">
    <location>
        <begin position="1"/>
        <end position="194"/>
    </location>
</feature>
<feature type="domain" description="Sm" evidence="3">
    <location>
        <begin position="1"/>
        <end position="71"/>
    </location>
</feature>
<feature type="domain" description="AD" evidence="2">
    <location>
        <begin position="79"/>
        <end position="173"/>
    </location>
</feature>
<feature type="region of interest" description="Disordered" evidence="4">
    <location>
        <begin position="175"/>
        <end position="194"/>
    </location>
</feature>
<feature type="compositionally biased region" description="Polar residues" evidence="4">
    <location>
        <begin position="176"/>
        <end position="194"/>
    </location>
</feature>
<accession>Q5ZML5</accession>
<proteinExistence type="evidence at transcript level"/>
<protein>
    <recommendedName>
        <fullName>Protein LSM12</fullName>
    </recommendedName>
</protein>
<keyword id="KW-0963">Cytoplasm</keyword>
<keyword id="KW-1185">Reference proteome</keyword>
<dbReference type="EMBL" id="AJ719369">
    <property type="protein sequence ID" value="CAG31028.1"/>
    <property type="molecule type" value="mRNA"/>
</dbReference>
<dbReference type="RefSeq" id="NP_001131123.1">
    <property type="nucleotide sequence ID" value="NM_001137651.1"/>
</dbReference>
<dbReference type="FunCoup" id="Q5ZML5">
    <property type="interactions" value="855"/>
</dbReference>
<dbReference type="STRING" id="9031.ENSGALP00000043938"/>
<dbReference type="PaxDb" id="9031-ENSGALP00000042759"/>
<dbReference type="GeneID" id="776864"/>
<dbReference type="KEGG" id="gga:776864"/>
<dbReference type="CTD" id="124801"/>
<dbReference type="VEuPathDB" id="HostDB:geneid_776864"/>
<dbReference type="eggNOG" id="KOG4401">
    <property type="taxonomic scope" value="Eukaryota"/>
</dbReference>
<dbReference type="HOGENOM" id="CLU_073383_3_0_1"/>
<dbReference type="InParanoid" id="Q5ZML5"/>
<dbReference type="OMA" id="FEGELYC"/>
<dbReference type="OrthoDB" id="1057137at2759"/>
<dbReference type="PhylomeDB" id="Q5ZML5"/>
<dbReference type="PRO" id="PR:Q5ZML5"/>
<dbReference type="Proteomes" id="UP000000539">
    <property type="component" value="Unassembled WGS sequence"/>
</dbReference>
<dbReference type="GO" id="GO:0005737">
    <property type="term" value="C:cytoplasm"/>
    <property type="evidence" value="ECO:0000250"/>
    <property type="project" value="UniProtKB"/>
</dbReference>
<dbReference type="GO" id="GO:0003723">
    <property type="term" value="F:RNA binding"/>
    <property type="evidence" value="ECO:0007669"/>
    <property type="project" value="InterPro"/>
</dbReference>
<dbReference type="CDD" id="cd01735">
    <property type="entry name" value="LSm12_N"/>
    <property type="match status" value="1"/>
</dbReference>
<dbReference type="InterPro" id="IPR047574">
    <property type="entry name" value="AD"/>
</dbReference>
<dbReference type="InterPro" id="IPR039683">
    <property type="entry name" value="Lsm12-like"/>
</dbReference>
<dbReference type="InterPro" id="IPR019181">
    <property type="entry name" value="LSM12_ABD"/>
</dbReference>
<dbReference type="InterPro" id="IPR048478">
    <property type="entry name" value="LSM12_LSM"/>
</dbReference>
<dbReference type="InterPro" id="IPR047575">
    <property type="entry name" value="Sm"/>
</dbReference>
<dbReference type="PANTHER" id="PTHR13542">
    <property type="entry name" value="LSM12 HOMOLOG"/>
    <property type="match status" value="1"/>
</dbReference>
<dbReference type="Pfam" id="PF09793">
    <property type="entry name" value="AD"/>
    <property type="match status" value="1"/>
</dbReference>
<dbReference type="Pfam" id="PF21166">
    <property type="entry name" value="LSM12_LSM"/>
    <property type="match status" value="1"/>
</dbReference>
<dbReference type="SMART" id="SM00995">
    <property type="entry name" value="AD"/>
    <property type="match status" value="1"/>
</dbReference>
<dbReference type="PROSITE" id="PS52001">
    <property type="entry name" value="AD"/>
    <property type="match status" value="1"/>
</dbReference>
<dbReference type="PROSITE" id="PS52002">
    <property type="entry name" value="SM"/>
    <property type="match status" value="1"/>
</dbReference>
<gene>
    <name type="primary">LSM12</name>
    <name type="ORF">RCJMB04_1k23</name>
</gene>
<evidence type="ECO:0000250" key="1">
    <source>
        <dbReference type="UniProtKB" id="Q3MHD2"/>
    </source>
</evidence>
<evidence type="ECO:0000255" key="2">
    <source>
        <dbReference type="PROSITE-ProRule" id="PRU01345"/>
    </source>
</evidence>
<evidence type="ECO:0000255" key="3">
    <source>
        <dbReference type="PROSITE-ProRule" id="PRU01346"/>
    </source>
</evidence>
<evidence type="ECO:0000256" key="4">
    <source>
        <dbReference type="SAM" id="MobiDB-lite"/>
    </source>
</evidence>
<evidence type="ECO:0000305" key="5"/>
<reference key="1">
    <citation type="journal article" date="2005" name="Genome Biol.">
        <title>Full-length cDNAs from chicken bursal lymphocytes to facilitate gene function analysis.</title>
        <authorList>
            <person name="Caldwell R.B."/>
            <person name="Kierzek A.M."/>
            <person name="Arakawa H."/>
            <person name="Bezzubov Y."/>
            <person name="Zaim J."/>
            <person name="Fiedler P."/>
            <person name="Kutter S."/>
            <person name="Blagodatski A."/>
            <person name="Kostovska D."/>
            <person name="Koter M."/>
            <person name="Plachy J."/>
            <person name="Carninci P."/>
            <person name="Hayashizaki Y."/>
            <person name="Buerstedde J.-M."/>
        </authorList>
    </citation>
    <scope>NUCLEOTIDE SEQUENCE [LARGE SCALE MRNA]</scope>
    <source>
        <strain>CB</strain>
        <tissue>Bursa of Fabricius</tissue>
    </source>
</reference>
<organism>
    <name type="scientific">Gallus gallus</name>
    <name type="common">Chicken</name>
    <dbReference type="NCBI Taxonomy" id="9031"/>
    <lineage>
        <taxon>Eukaryota</taxon>
        <taxon>Metazoa</taxon>
        <taxon>Chordata</taxon>
        <taxon>Craniata</taxon>
        <taxon>Vertebrata</taxon>
        <taxon>Euteleostomi</taxon>
        <taxon>Archelosauria</taxon>
        <taxon>Archosauria</taxon>
        <taxon>Dinosauria</taxon>
        <taxon>Saurischia</taxon>
        <taxon>Theropoda</taxon>
        <taxon>Coelurosauria</taxon>
        <taxon>Aves</taxon>
        <taxon>Neognathae</taxon>
        <taxon>Galloanserae</taxon>
        <taxon>Galliformes</taxon>
        <taxon>Phasianidae</taxon>
        <taxon>Phasianinae</taxon>
        <taxon>Gallus</taxon>
    </lineage>
</organism>
<comment type="function">
    <text evidence="1">Nicotinic acid adenine dinucleotide phosphate (NAADP) binding protein.</text>
</comment>
<comment type="subcellular location">
    <subcellularLocation>
        <location evidence="1">Cytoplasm</location>
    </subcellularLocation>
</comment>
<comment type="similarity">
    <text evidence="5">Belongs to the LSM12 family.</text>
</comment>